<accession>Q7N5A1</accession>
<feature type="chain" id="PRO_0000187789" description="Peptidyl-tRNA hydrolase">
    <location>
        <begin position="1"/>
        <end position="196"/>
    </location>
</feature>
<feature type="active site" description="Proton acceptor" evidence="1">
    <location>
        <position position="22"/>
    </location>
</feature>
<feature type="binding site" evidence="1">
    <location>
        <position position="17"/>
    </location>
    <ligand>
        <name>tRNA</name>
        <dbReference type="ChEBI" id="CHEBI:17843"/>
    </ligand>
</feature>
<feature type="binding site" evidence="1">
    <location>
        <position position="68"/>
    </location>
    <ligand>
        <name>tRNA</name>
        <dbReference type="ChEBI" id="CHEBI:17843"/>
    </ligand>
</feature>
<feature type="binding site" evidence="1">
    <location>
        <position position="70"/>
    </location>
    <ligand>
        <name>tRNA</name>
        <dbReference type="ChEBI" id="CHEBI:17843"/>
    </ligand>
</feature>
<feature type="binding site" evidence="1">
    <location>
        <position position="116"/>
    </location>
    <ligand>
        <name>tRNA</name>
        <dbReference type="ChEBI" id="CHEBI:17843"/>
    </ligand>
</feature>
<feature type="site" description="Discriminates between blocked and unblocked aminoacyl-tRNA" evidence="1">
    <location>
        <position position="12"/>
    </location>
</feature>
<feature type="site" description="Stabilizes the basic form of H active site to accept a proton" evidence="1">
    <location>
        <position position="95"/>
    </location>
</feature>
<gene>
    <name evidence="1" type="primary">pth</name>
    <name type="ordered locus">plu2055</name>
</gene>
<keyword id="KW-0963">Cytoplasm</keyword>
<keyword id="KW-0378">Hydrolase</keyword>
<keyword id="KW-1185">Reference proteome</keyword>
<keyword id="KW-0694">RNA-binding</keyword>
<keyword id="KW-0820">tRNA-binding</keyword>
<evidence type="ECO:0000255" key="1">
    <source>
        <dbReference type="HAMAP-Rule" id="MF_00083"/>
    </source>
</evidence>
<sequence length="196" mass="21606">MSNIKLIVGLANPGAEYAQTRHNAGAWYVDLLARSHNQSLKEESKFFGYTARINICGHDVRLLVPTTFMNLSGKSVVALASFYRIQPDEILVAHDELDLPPGVAKMKLGGSHGGHNGLKDIQNKFGNNPNFYRLRIGIGHPGDKNKVVGFVLGKPPASEQQLIDDAIDEARRCTDILMKQDMDKAINRLHSFKASV</sequence>
<organism>
    <name type="scientific">Photorhabdus laumondii subsp. laumondii (strain DSM 15139 / CIP 105565 / TT01)</name>
    <name type="common">Photorhabdus luminescens subsp. laumondii</name>
    <dbReference type="NCBI Taxonomy" id="243265"/>
    <lineage>
        <taxon>Bacteria</taxon>
        <taxon>Pseudomonadati</taxon>
        <taxon>Pseudomonadota</taxon>
        <taxon>Gammaproteobacteria</taxon>
        <taxon>Enterobacterales</taxon>
        <taxon>Morganellaceae</taxon>
        <taxon>Photorhabdus</taxon>
    </lineage>
</organism>
<comment type="function">
    <text evidence="1">Hydrolyzes ribosome-free peptidyl-tRNAs (with 1 or more amino acids incorporated), which drop off the ribosome during protein synthesis, or as a result of ribosome stalling.</text>
</comment>
<comment type="function">
    <text evidence="1">Catalyzes the release of premature peptidyl moieties from peptidyl-tRNA molecules trapped in stalled 50S ribosomal subunits, and thus maintains levels of free tRNAs and 50S ribosomes.</text>
</comment>
<comment type="catalytic activity">
    <reaction evidence="1">
        <text>an N-acyl-L-alpha-aminoacyl-tRNA + H2O = an N-acyl-L-amino acid + a tRNA + H(+)</text>
        <dbReference type="Rhea" id="RHEA:54448"/>
        <dbReference type="Rhea" id="RHEA-COMP:10123"/>
        <dbReference type="Rhea" id="RHEA-COMP:13883"/>
        <dbReference type="ChEBI" id="CHEBI:15377"/>
        <dbReference type="ChEBI" id="CHEBI:15378"/>
        <dbReference type="ChEBI" id="CHEBI:59874"/>
        <dbReference type="ChEBI" id="CHEBI:78442"/>
        <dbReference type="ChEBI" id="CHEBI:138191"/>
        <dbReference type="EC" id="3.1.1.29"/>
    </reaction>
</comment>
<comment type="subunit">
    <text evidence="1">Monomer.</text>
</comment>
<comment type="subcellular location">
    <subcellularLocation>
        <location evidence="1">Cytoplasm</location>
    </subcellularLocation>
</comment>
<comment type="similarity">
    <text evidence="1">Belongs to the PTH family.</text>
</comment>
<protein>
    <recommendedName>
        <fullName evidence="1">Peptidyl-tRNA hydrolase</fullName>
        <shortName evidence="1">Pth</shortName>
        <ecNumber evidence="1">3.1.1.29</ecNumber>
    </recommendedName>
</protein>
<dbReference type="EC" id="3.1.1.29" evidence="1"/>
<dbReference type="EMBL" id="BX571865">
    <property type="protein sequence ID" value="CAE14348.1"/>
    <property type="molecule type" value="Genomic_DNA"/>
</dbReference>
<dbReference type="RefSeq" id="WP_011146310.1">
    <property type="nucleotide sequence ID" value="NC_005126.1"/>
</dbReference>
<dbReference type="SMR" id="Q7N5A1"/>
<dbReference type="STRING" id="243265.plu2055"/>
<dbReference type="GeneID" id="48848330"/>
<dbReference type="KEGG" id="plu:plu2055"/>
<dbReference type="eggNOG" id="COG0193">
    <property type="taxonomic scope" value="Bacteria"/>
</dbReference>
<dbReference type="HOGENOM" id="CLU_062456_3_1_6"/>
<dbReference type="OrthoDB" id="9800507at2"/>
<dbReference type="Proteomes" id="UP000002514">
    <property type="component" value="Chromosome"/>
</dbReference>
<dbReference type="GO" id="GO:0005737">
    <property type="term" value="C:cytoplasm"/>
    <property type="evidence" value="ECO:0007669"/>
    <property type="project" value="UniProtKB-SubCell"/>
</dbReference>
<dbReference type="GO" id="GO:0004045">
    <property type="term" value="F:peptidyl-tRNA hydrolase activity"/>
    <property type="evidence" value="ECO:0007669"/>
    <property type="project" value="UniProtKB-UniRule"/>
</dbReference>
<dbReference type="GO" id="GO:0000049">
    <property type="term" value="F:tRNA binding"/>
    <property type="evidence" value="ECO:0007669"/>
    <property type="project" value="UniProtKB-UniRule"/>
</dbReference>
<dbReference type="GO" id="GO:0006515">
    <property type="term" value="P:protein quality control for misfolded or incompletely synthesized proteins"/>
    <property type="evidence" value="ECO:0007669"/>
    <property type="project" value="UniProtKB-UniRule"/>
</dbReference>
<dbReference type="GO" id="GO:0072344">
    <property type="term" value="P:rescue of stalled ribosome"/>
    <property type="evidence" value="ECO:0007669"/>
    <property type="project" value="UniProtKB-UniRule"/>
</dbReference>
<dbReference type="CDD" id="cd00462">
    <property type="entry name" value="PTH"/>
    <property type="match status" value="1"/>
</dbReference>
<dbReference type="FunFam" id="3.40.50.1470:FF:000001">
    <property type="entry name" value="Peptidyl-tRNA hydrolase"/>
    <property type="match status" value="1"/>
</dbReference>
<dbReference type="Gene3D" id="3.40.50.1470">
    <property type="entry name" value="Peptidyl-tRNA hydrolase"/>
    <property type="match status" value="1"/>
</dbReference>
<dbReference type="HAMAP" id="MF_00083">
    <property type="entry name" value="Pept_tRNA_hydro_bact"/>
    <property type="match status" value="1"/>
</dbReference>
<dbReference type="InterPro" id="IPR001328">
    <property type="entry name" value="Pept_tRNA_hydro"/>
</dbReference>
<dbReference type="InterPro" id="IPR018171">
    <property type="entry name" value="Pept_tRNA_hydro_CS"/>
</dbReference>
<dbReference type="InterPro" id="IPR036416">
    <property type="entry name" value="Pept_tRNA_hydro_sf"/>
</dbReference>
<dbReference type="NCBIfam" id="TIGR00447">
    <property type="entry name" value="pth"/>
    <property type="match status" value="1"/>
</dbReference>
<dbReference type="PANTHER" id="PTHR17224">
    <property type="entry name" value="PEPTIDYL-TRNA HYDROLASE"/>
    <property type="match status" value="1"/>
</dbReference>
<dbReference type="PANTHER" id="PTHR17224:SF1">
    <property type="entry name" value="PEPTIDYL-TRNA HYDROLASE"/>
    <property type="match status" value="1"/>
</dbReference>
<dbReference type="Pfam" id="PF01195">
    <property type="entry name" value="Pept_tRNA_hydro"/>
    <property type="match status" value="1"/>
</dbReference>
<dbReference type="SUPFAM" id="SSF53178">
    <property type="entry name" value="Peptidyl-tRNA hydrolase-like"/>
    <property type="match status" value="1"/>
</dbReference>
<dbReference type="PROSITE" id="PS01195">
    <property type="entry name" value="PEPT_TRNA_HYDROL_1"/>
    <property type="match status" value="1"/>
</dbReference>
<dbReference type="PROSITE" id="PS01196">
    <property type="entry name" value="PEPT_TRNA_HYDROL_2"/>
    <property type="match status" value="1"/>
</dbReference>
<proteinExistence type="inferred from homology"/>
<reference key="1">
    <citation type="journal article" date="2003" name="Nat. Biotechnol.">
        <title>The genome sequence of the entomopathogenic bacterium Photorhabdus luminescens.</title>
        <authorList>
            <person name="Duchaud E."/>
            <person name="Rusniok C."/>
            <person name="Frangeul L."/>
            <person name="Buchrieser C."/>
            <person name="Givaudan A."/>
            <person name="Taourit S."/>
            <person name="Bocs S."/>
            <person name="Boursaux-Eude C."/>
            <person name="Chandler M."/>
            <person name="Charles J.-F."/>
            <person name="Dassa E."/>
            <person name="Derose R."/>
            <person name="Derzelle S."/>
            <person name="Freyssinet G."/>
            <person name="Gaudriault S."/>
            <person name="Medigue C."/>
            <person name="Lanois A."/>
            <person name="Powell K."/>
            <person name="Siguier P."/>
            <person name="Vincent R."/>
            <person name="Wingate V."/>
            <person name="Zouine M."/>
            <person name="Glaser P."/>
            <person name="Boemare N."/>
            <person name="Danchin A."/>
            <person name="Kunst F."/>
        </authorList>
    </citation>
    <scope>NUCLEOTIDE SEQUENCE [LARGE SCALE GENOMIC DNA]</scope>
    <source>
        <strain>DSM 15139 / CIP 105565 / TT01</strain>
    </source>
</reference>
<name>PTH_PHOLL</name>